<evidence type="ECO:0000255" key="1">
    <source>
        <dbReference type="HAMAP-Rule" id="MF_01825"/>
    </source>
</evidence>
<reference key="1">
    <citation type="journal article" date="2006" name="PLoS Biol.">
        <title>The genome of deep-sea vent chemolithoautotroph Thiomicrospira crunogena XCL-2.</title>
        <authorList>
            <person name="Scott K.M."/>
            <person name="Sievert S.M."/>
            <person name="Abril F.N."/>
            <person name="Ball L.A."/>
            <person name="Barrett C.J."/>
            <person name="Blake R.A."/>
            <person name="Boller A.J."/>
            <person name="Chain P.S.G."/>
            <person name="Clark J.A."/>
            <person name="Davis C.R."/>
            <person name="Detter C."/>
            <person name="Do K.F."/>
            <person name="Dobrinski K.P."/>
            <person name="Faza B.I."/>
            <person name="Fitzpatrick K.A."/>
            <person name="Freyermuth S.K."/>
            <person name="Harmer T.L."/>
            <person name="Hauser L.J."/>
            <person name="Huegler M."/>
            <person name="Kerfeld C.A."/>
            <person name="Klotz M.G."/>
            <person name="Kong W.W."/>
            <person name="Land M."/>
            <person name="Lapidus A."/>
            <person name="Larimer F.W."/>
            <person name="Longo D.L."/>
            <person name="Lucas S."/>
            <person name="Malfatti S.A."/>
            <person name="Massey S.E."/>
            <person name="Martin D.D."/>
            <person name="McCuddin Z."/>
            <person name="Meyer F."/>
            <person name="Moore J.L."/>
            <person name="Ocampo L.H. Jr."/>
            <person name="Paul J.H."/>
            <person name="Paulsen I.T."/>
            <person name="Reep D.K."/>
            <person name="Ren Q."/>
            <person name="Ross R.L."/>
            <person name="Sato P.Y."/>
            <person name="Thomas P."/>
            <person name="Tinkham L.E."/>
            <person name="Zeruth G.T."/>
        </authorList>
    </citation>
    <scope>NUCLEOTIDE SEQUENCE [LARGE SCALE GENOMIC DNA]</scope>
    <source>
        <strain>DSM 25203 / XCL-2</strain>
    </source>
</reference>
<feature type="chain" id="PRO_0000297478" description="Erythronate-4-phosphate dehydrogenase">
    <location>
        <begin position="1"/>
        <end position="375"/>
    </location>
</feature>
<feature type="active site" evidence="1">
    <location>
        <position position="211"/>
    </location>
</feature>
<feature type="active site" evidence="1">
    <location>
        <position position="236"/>
    </location>
</feature>
<feature type="active site" description="Proton donor" evidence="1">
    <location>
        <position position="253"/>
    </location>
</feature>
<feature type="binding site" evidence="1">
    <location>
        <position position="49"/>
    </location>
    <ligand>
        <name>substrate</name>
    </ligand>
</feature>
<feature type="binding site" evidence="1">
    <location>
        <position position="150"/>
    </location>
    <ligand>
        <name>NAD(+)</name>
        <dbReference type="ChEBI" id="CHEBI:57540"/>
    </ligand>
</feature>
<feature type="binding site" evidence="1">
    <location>
        <position position="178"/>
    </location>
    <ligand>
        <name>NAD(+)</name>
        <dbReference type="ChEBI" id="CHEBI:57540"/>
    </ligand>
</feature>
<feature type="binding site" evidence="1">
    <location>
        <position position="231"/>
    </location>
    <ligand>
        <name>NAD(+)</name>
        <dbReference type="ChEBI" id="CHEBI:57540"/>
    </ligand>
</feature>
<feature type="binding site" evidence="1">
    <location>
        <position position="256"/>
    </location>
    <ligand>
        <name>NAD(+)</name>
        <dbReference type="ChEBI" id="CHEBI:57540"/>
    </ligand>
</feature>
<protein>
    <recommendedName>
        <fullName evidence="1">Erythronate-4-phosphate dehydrogenase</fullName>
        <ecNumber evidence="1">1.1.1.290</ecNumber>
    </recommendedName>
</protein>
<proteinExistence type="inferred from homology"/>
<keyword id="KW-0963">Cytoplasm</keyword>
<keyword id="KW-0520">NAD</keyword>
<keyword id="KW-0560">Oxidoreductase</keyword>
<keyword id="KW-0664">Pyridoxine biosynthesis</keyword>
<name>PDXB_HYDCU</name>
<sequence length="375" mass="42174">MTPSRTLVIDDAVPYAKELFSHLGNVISLPGKEINTEHLQNADALIVRSRTQVNSALLEHTNVSFVGSTVVGLDHVDQPYLKENAIEFYSAQGCNANSVSEYVITNLVNLAIEKKFTLSEKSLAIIGVGHVGKLVEKKARALGMTVLLNDPPRARQEMSDEFIDLDNALKSDIITVHTPLTKTGQDATFHLLSTDKLKKIQPHQILINAARGGIIDEQAWINTPTESNIIDCWENEPNINPDLYNQADIATPHIAGHALDAKIAGSEMVYRALCQHWQISPDDSWRRFLPPPPPPISLSLTGNHQEDIHNVLQQCYRPEEDDAAIRANNIVVTHKKYEYYRRHYPIHREWPQHRVIKTPDPTFNNLLYSLGFQLI</sequence>
<accession>Q31IH6</accession>
<dbReference type="EC" id="1.1.1.290" evidence="1"/>
<dbReference type="EMBL" id="CP000109">
    <property type="protein sequence ID" value="ABB41047.1"/>
    <property type="molecule type" value="Genomic_DNA"/>
</dbReference>
<dbReference type="SMR" id="Q31IH6"/>
<dbReference type="STRING" id="317025.Tcr_0451"/>
<dbReference type="KEGG" id="tcx:Tcr_0451"/>
<dbReference type="eggNOG" id="COG0111">
    <property type="taxonomic scope" value="Bacteria"/>
</dbReference>
<dbReference type="HOGENOM" id="CLU_019796_4_0_6"/>
<dbReference type="OrthoDB" id="9770208at2"/>
<dbReference type="UniPathway" id="UPA00244">
    <property type="reaction ID" value="UER00310"/>
</dbReference>
<dbReference type="GO" id="GO:0005737">
    <property type="term" value="C:cytoplasm"/>
    <property type="evidence" value="ECO:0007669"/>
    <property type="project" value="UniProtKB-SubCell"/>
</dbReference>
<dbReference type="GO" id="GO:0033711">
    <property type="term" value="F:4-phosphoerythronate dehydrogenase activity"/>
    <property type="evidence" value="ECO:0007669"/>
    <property type="project" value="UniProtKB-EC"/>
</dbReference>
<dbReference type="GO" id="GO:0051287">
    <property type="term" value="F:NAD binding"/>
    <property type="evidence" value="ECO:0007669"/>
    <property type="project" value="InterPro"/>
</dbReference>
<dbReference type="GO" id="GO:0046983">
    <property type="term" value="F:protein dimerization activity"/>
    <property type="evidence" value="ECO:0007669"/>
    <property type="project" value="InterPro"/>
</dbReference>
<dbReference type="GO" id="GO:0008615">
    <property type="term" value="P:pyridoxine biosynthetic process"/>
    <property type="evidence" value="ECO:0007669"/>
    <property type="project" value="UniProtKB-UniRule"/>
</dbReference>
<dbReference type="CDD" id="cd12158">
    <property type="entry name" value="ErythrP_dh"/>
    <property type="match status" value="1"/>
</dbReference>
<dbReference type="Gene3D" id="3.30.1370.170">
    <property type="match status" value="1"/>
</dbReference>
<dbReference type="Gene3D" id="3.40.50.720">
    <property type="entry name" value="NAD(P)-binding Rossmann-like Domain"/>
    <property type="match status" value="2"/>
</dbReference>
<dbReference type="HAMAP" id="MF_01825">
    <property type="entry name" value="PdxB"/>
    <property type="match status" value="1"/>
</dbReference>
<dbReference type="InterPro" id="IPR050418">
    <property type="entry name" value="D-iso_2-hydroxyacid_DH_PdxB"/>
</dbReference>
<dbReference type="InterPro" id="IPR006139">
    <property type="entry name" value="D-isomer_2_OHA_DH_cat_dom"/>
</dbReference>
<dbReference type="InterPro" id="IPR006140">
    <property type="entry name" value="D-isomer_DH_NAD-bd"/>
</dbReference>
<dbReference type="InterPro" id="IPR020921">
    <property type="entry name" value="Erythronate-4-P_DHase"/>
</dbReference>
<dbReference type="InterPro" id="IPR024531">
    <property type="entry name" value="Erythronate-4-P_DHase_dimer"/>
</dbReference>
<dbReference type="InterPro" id="IPR036291">
    <property type="entry name" value="NAD(P)-bd_dom_sf"/>
</dbReference>
<dbReference type="InterPro" id="IPR038251">
    <property type="entry name" value="PdxB_dimer_sf"/>
</dbReference>
<dbReference type="PANTHER" id="PTHR43761:SF1">
    <property type="entry name" value="D-ISOMER SPECIFIC 2-HYDROXYACID DEHYDROGENASE CATALYTIC DOMAIN-CONTAINING PROTEIN-RELATED"/>
    <property type="match status" value="1"/>
</dbReference>
<dbReference type="PANTHER" id="PTHR43761">
    <property type="entry name" value="D-ISOMER SPECIFIC 2-HYDROXYACID DEHYDROGENASE FAMILY PROTEIN (AFU_ORTHOLOGUE AFUA_1G13630)"/>
    <property type="match status" value="1"/>
</dbReference>
<dbReference type="Pfam" id="PF00389">
    <property type="entry name" value="2-Hacid_dh"/>
    <property type="match status" value="1"/>
</dbReference>
<dbReference type="Pfam" id="PF02826">
    <property type="entry name" value="2-Hacid_dh_C"/>
    <property type="match status" value="1"/>
</dbReference>
<dbReference type="Pfam" id="PF11890">
    <property type="entry name" value="DUF3410"/>
    <property type="match status" value="1"/>
</dbReference>
<dbReference type="SUPFAM" id="SSF52283">
    <property type="entry name" value="Formate/glycerate dehydrogenase catalytic domain-like"/>
    <property type="match status" value="1"/>
</dbReference>
<dbReference type="SUPFAM" id="SSF51735">
    <property type="entry name" value="NAD(P)-binding Rossmann-fold domains"/>
    <property type="match status" value="1"/>
</dbReference>
<organism>
    <name type="scientific">Hydrogenovibrio crunogenus (strain DSM 25203 / XCL-2)</name>
    <name type="common">Thiomicrospira crunogena</name>
    <dbReference type="NCBI Taxonomy" id="317025"/>
    <lineage>
        <taxon>Bacteria</taxon>
        <taxon>Pseudomonadati</taxon>
        <taxon>Pseudomonadota</taxon>
        <taxon>Gammaproteobacteria</taxon>
        <taxon>Thiotrichales</taxon>
        <taxon>Piscirickettsiaceae</taxon>
        <taxon>Hydrogenovibrio</taxon>
    </lineage>
</organism>
<gene>
    <name evidence="1" type="primary">pdxB</name>
    <name type="ordered locus">Tcr_0451</name>
</gene>
<comment type="function">
    <text evidence="1">Catalyzes the oxidation of erythronate-4-phosphate to 3-hydroxy-2-oxo-4-phosphonooxybutanoate.</text>
</comment>
<comment type="catalytic activity">
    <reaction evidence="1">
        <text>4-phospho-D-erythronate + NAD(+) = (R)-3-hydroxy-2-oxo-4-phosphooxybutanoate + NADH + H(+)</text>
        <dbReference type="Rhea" id="RHEA:18829"/>
        <dbReference type="ChEBI" id="CHEBI:15378"/>
        <dbReference type="ChEBI" id="CHEBI:57540"/>
        <dbReference type="ChEBI" id="CHEBI:57945"/>
        <dbReference type="ChEBI" id="CHEBI:58538"/>
        <dbReference type="ChEBI" id="CHEBI:58766"/>
        <dbReference type="EC" id="1.1.1.290"/>
    </reaction>
</comment>
<comment type="pathway">
    <text evidence="1">Cofactor biosynthesis; pyridoxine 5'-phosphate biosynthesis; pyridoxine 5'-phosphate from D-erythrose 4-phosphate: step 2/5.</text>
</comment>
<comment type="subunit">
    <text evidence="1">Homodimer.</text>
</comment>
<comment type="subcellular location">
    <subcellularLocation>
        <location evidence="1">Cytoplasm</location>
    </subcellularLocation>
</comment>
<comment type="similarity">
    <text evidence="1">Belongs to the D-isomer specific 2-hydroxyacid dehydrogenase family. PdxB subfamily.</text>
</comment>